<evidence type="ECO:0000305" key="1"/>
<keyword id="KW-1185">Reference proteome</keyword>
<feature type="chain" id="PRO_0000214058" description="Pirin-like protein CC_0481">
    <location>
        <begin position="1"/>
        <end position="276"/>
    </location>
</feature>
<comment type="similarity">
    <text evidence="1">Belongs to the pirin family.</text>
</comment>
<organism>
    <name type="scientific">Caulobacter vibrioides (strain ATCC 19089 / CIP 103742 / CB 15)</name>
    <name type="common">Caulobacter crescentus</name>
    <dbReference type="NCBI Taxonomy" id="190650"/>
    <lineage>
        <taxon>Bacteria</taxon>
        <taxon>Pseudomonadati</taxon>
        <taxon>Pseudomonadota</taxon>
        <taxon>Alphaproteobacteria</taxon>
        <taxon>Caulobacterales</taxon>
        <taxon>Caulobacteraceae</taxon>
        <taxon>Caulobacter</taxon>
    </lineage>
</organism>
<gene>
    <name type="ordered locus">CC_0481</name>
</gene>
<name>Y481_CAUVC</name>
<dbReference type="EMBL" id="AE005673">
    <property type="protein sequence ID" value="AAK22468.1"/>
    <property type="molecule type" value="Genomic_DNA"/>
</dbReference>
<dbReference type="PIR" id="H87308">
    <property type="entry name" value="H87308"/>
</dbReference>
<dbReference type="RefSeq" id="NP_419300.1">
    <property type="nucleotide sequence ID" value="NC_002696.2"/>
</dbReference>
<dbReference type="RefSeq" id="WP_010918369.1">
    <property type="nucleotide sequence ID" value="NC_002696.2"/>
</dbReference>
<dbReference type="SMR" id="P58112"/>
<dbReference type="STRING" id="190650.CC_0481"/>
<dbReference type="EnsemblBacteria" id="AAK22468">
    <property type="protein sequence ID" value="AAK22468"/>
    <property type="gene ID" value="CC_0481"/>
</dbReference>
<dbReference type="KEGG" id="ccr:CC_0481"/>
<dbReference type="PATRIC" id="fig|190650.5.peg.488"/>
<dbReference type="eggNOG" id="COG1741">
    <property type="taxonomic scope" value="Bacteria"/>
</dbReference>
<dbReference type="HOGENOM" id="CLU_045717_5_0_5"/>
<dbReference type="BioCyc" id="CAULO:CC0481-MONOMER"/>
<dbReference type="Proteomes" id="UP000001816">
    <property type="component" value="Chromosome"/>
</dbReference>
<dbReference type="CDD" id="cd02247">
    <property type="entry name" value="cupin_pirin_C"/>
    <property type="match status" value="1"/>
</dbReference>
<dbReference type="CDD" id="cd02909">
    <property type="entry name" value="cupin_pirin_N"/>
    <property type="match status" value="1"/>
</dbReference>
<dbReference type="Gene3D" id="2.60.120.10">
    <property type="entry name" value="Jelly Rolls"/>
    <property type="match status" value="2"/>
</dbReference>
<dbReference type="InterPro" id="IPR012093">
    <property type="entry name" value="Pirin"/>
</dbReference>
<dbReference type="InterPro" id="IPR008778">
    <property type="entry name" value="Pirin_C_dom"/>
</dbReference>
<dbReference type="InterPro" id="IPR003829">
    <property type="entry name" value="Pirin_N_dom"/>
</dbReference>
<dbReference type="InterPro" id="IPR014710">
    <property type="entry name" value="RmlC-like_jellyroll"/>
</dbReference>
<dbReference type="InterPro" id="IPR011051">
    <property type="entry name" value="RmlC_Cupin_sf"/>
</dbReference>
<dbReference type="PANTHER" id="PTHR13903:SF8">
    <property type="entry name" value="PIRIN"/>
    <property type="match status" value="1"/>
</dbReference>
<dbReference type="PANTHER" id="PTHR13903">
    <property type="entry name" value="PIRIN-RELATED"/>
    <property type="match status" value="1"/>
</dbReference>
<dbReference type="Pfam" id="PF02678">
    <property type="entry name" value="Pirin"/>
    <property type="match status" value="1"/>
</dbReference>
<dbReference type="Pfam" id="PF05726">
    <property type="entry name" value="Pirin_C"/>
    <property type="match status" value="1"/>
</dbReference>
<dbReference type="PIRSF" id="PIRSF006232">
    <property type="entry name" value="Pirin"/>
    <property type="match status" value="1"/>
</dbReference>
<dbReference type="SUPFAM" id="SSF51182">
    <property type="entry name" value="RmlC-like cupins"/>
    <property type="match status" value="1"/>
</dbReference>
<proteinExistence type="inferred from homology"/>
<accession>P58112</accession>
<sequence>MPVRPVLKIVKGQPTSDGAGVRLTRMLGTPEAQMFDPFLMLDCFDNDQASDYLGGFPDHPHRGFETVTYMLEGRMRHKDNTGREGVIGPGGIQWMRAGKGIVHSEMPEQDQGRMRGFQLWVNLPARLKMSAPGYQEFETDSIPVEARDGGVTVKVISGATETGTAGPIGGGAVDALYFDVALPAGTVFEEPVGDDRNAMLAVYEGKVRVAHDTVDALSGVFLGRGDTVRVEAVTDARVLLLAGRPIGEPVFWHGPFVMDTREGLMQAFDDFQRGRF</sequence>
<protein>
    <recommendedName>
        <fullName>Pirin-like protein CC_0481</fullName>
    </recommendedName>
</protein>
<reference key="1">
    <citation type="journal article" date="2001" name="Proc. Natl. Acad. Sci. U.S.A.">
        <title>Complete genome sequence of Caulobacter crescentus.</title>
        <authorList>
            <person name="Nierman W.C."/>
            <person name="Feldblyum T.V."/>
            <person name="Laub M.T."/>
            <person name="Paulsen I.T."/>
            <person name="Nelson K.E."/>
            <person name="Eisen J.A."/>
            <person name="Heidelberg J.F."/>
            <person name="Alley M.R.K."/>
            <person name="Ohta N."/>
            <person name="Maddock J.R."/>
            <person name="Potocka I."/>
            <person name="Nelson W.C."/>
            <person name="Newton A."/>
            <person name="Stephens C."/>
            <person name="Phadke N.D."/>
            <person name="Ely B."/>
            <person name="DeBoy R.T."/>
            <person name="Dodson R.J."/>
            <person name="Durkin A.S."/>
            <person name="Gwinn M.L."/>
            <person name="Haft D.H."/>
            <person name="Kolonay J.F."/>
            <person name="Smit J."/>
            <person name="Craven M.B."/>
            <person name="Khouri H.M."/>
            <person name="Shetty J."/>
            <person name="Berry K.J."/>
            <person name="Utterback T.R."/>
            <person name="Tran K."/>
            <person name="Wolf A.M."/>
            <person name="Vamathevan J.J."/>
            <person name="Ermolaeva M.D."/>
            <person name="White O."/>
            <person name="Salzberg S.L."/>
            <person name="Venter J.C."/>
            <person name="Shapiro L."/>
            <person name="Fraser C.M."/>
        </authorList>
    </citation>
    <scope>NUCLEOTIDE SEQUENCE [LARGE SCALE GENOMIC DNA]</scope>
    <source>
        <strain>ATCC 19089 / CIP 103742 / CB 15</strain>
    </source>
</reference>